<accession>A9MUB9</accession>
<keyword id="KW-0030">Aminoacyl-tRNA synthetase</keyword>
<keyword id="KW-0067">ATP-binding</keyword>
<keyword id="KW-0963">Cytoplasm</keyword>
<keyword id="KW-0436">Ligase</keyword>
<keyword id="KW-0547">Nucleotide-binding</keyword>
<keyword id="KW-0648">Protein biosynthesis</keyword>
<name>SYD_SALPB</name>
<dbReference type="EC" id="6.1.1.12" evidence="1"/>
<dbReference type="EMBL" id="CP000886">
    <property type="protein sequence ID" value="ABX66675.1"/>
    <property type="molecule type" value="Genomic_DNA"/>
</dbReference>
<dbReference type="RefSeq" id="WP_001258633.1">
    <property type="nucleotide sequence ID" value="NC_010102.1"/>
</dbReference>
<dbReference type="SMR" id="A9MUB9"/>
<dbReference type="KEGG" id="spq:SPAB_01263"/>
<dbReference type="PATRIC" id="fig|1016998.12.peg.1190"/>
<dbReference type="HOGENOM" id="CLU_014330_3_2_6"/>
<dbReference type="BioCyc" id="SENT1016998:SPAB_RS05240-MONOMER"/>
<dbReference type="Proteomes" id="UP000008556">
    <property type="component" value="Chromosome"/>
</dbReference>
<dbReference type="GO" id="GO:0005737">
    <property type="term" value="C:cytoplasm"/>
    <property type="evidence" value="ECO:0007669"/>
    <property type="project" value="UniProtKB-SubCell"/>
</dbReference>
<dbReference type="GO" id="GO:0004815">
    <property type="term" value="F:aspartate-tRNA ligase activity"/>
    <property type="evidence" value="ECO:0007669"/>
    <property type="project" value="UniProtKB-UniRule"/>
</dbReference>
<dbReference type="GO" id="GO:0005524">
    <property type="term" value="F:ATP binding"/>
    <property type="evidence" value="ECO:0007669"/>
    <property type="project" value="UniProtKB-UniRule"/>
</dbReference>
<dbReference type="GO" id="GO:0003676">
    <property type="term" value="F:nucleic acid binding"/>
    <property type="evidence" value="ECO:0007669"/>
    <property type="project" value="InterPro"/>
</dbReference>
<dbReference type="GO" id="GO:0006422">
    <property type="term" value="P:aspartyl-tRNA aminoacylation"/>
    <property type="evidence" value="ECO:0007669"/>
    <property type="project" value="UniProtKB-UniRule"/>
</dbReference>
<dbReference type="CDD" id="cd00777">
    <property type="entry name" value="AspRS_core"/>
    <property type="match status" value="1"/>
</dbReference>
<dbReference type="CDD" id="cd04317">
    <property type="entry name" value="EcAspRS_like_N"/>
    <property type="match status" value="1"/>
</dbReference>
<dbReference type="FunFam" id="2.40.50.140:FF:000080">
    <property type="entry name" value="Aspartate--tRNA ligase"/>
    <property type="match status" value="1"/>
</dbReference>
<dbReference type="FunFam" id="3.30.1360.30:FF:000001">
    <property type="entry name" value="Aspartate--tRNA ligase"/>
    <property type="match status" value="1"/>
</dbReference>
<dbReference type="Gene3D" id="3.30.930.10">
    <property type="entry name" value="Bira Bifunctional Protein, Domain 2"/>
    <property type="match status" value="1"/>
</dbReference>
<dbReference type="Gene3D" id="3.30.1360.30">
    <property type="entry name" value="GAD-like domain"/>
    <property type="match status" value="1"/>
</dbReference>
<dbReference type="Gene3D" id="2.40.50.140">
    <property type="entry name" value="Nucleic acid-binding proteins"/>
    <property type="match status" value="1"/>
</dbReference>
<dbReference type="HAMAP" id="MF_00044">
    <property type="entry name" value="Asp_tRNA_synth_type1"/>
    <property type="match status" value="1"/>
</dbReference>
<dbReference type="InterPro" id="IPR004364">
    <property type="entry name" value="Aa-tRNA-synt_II"/>
</dbReference>
<dbReference type="InterPro" id="IPR006195">
    <property type="entry name" value="aa-tRNA-synth_II"/>
</dbReference>
<dbReference type="InterPro" id="IPR045864">
    <property type="entry name" value="aa-tRNA-synth_II/BPL/LPL"/>
</dbReference>
<dbReference type="InterPro" id="IPR004524">
    <property type="entry name" value="Asp-tRNA-ligase_1"/>
</dbReference>
<dbReference type="InterPro" id="IPR047089">
    <property type="entry name" value="Asp-tRNA-ligase_1_N"/>
</dbReference>
<dbReference type="InterPro" id="IPR002312">
    <property type="entry name" value="Asp/Asn-tRNA-synth_IIb"/>
</dbReference>
<dbReference type="InterPro" id="IPR047090">
    <property type="entry name" value="AspRS_core"/>
</dbReference>
<dbReference type="InterPro" id="IPR004115">
    <property type="entry name" value="GAD-like_sf"/>
</dbReference>
<dbReference type="InterPro" id="IPR029351">
    <property type="entry name" value="GAD_dom"/>
</dbReference>
<dbReference type="InterPro" id="IPR012340">
    <property type="entry name" value="NA-bd_OB-fold"/>
</dbReference>
<dbReference type="InterPro" id="IPR004365">
    <property type="entry name" value="NA-bd_OB_tRNA"/>
</dbReference>
<dbReference type="NCBIfam" id="TIGR00459">
    <property type="entry name" value="aspS_bact"/>
    <property type="match status" value="1"/>
</dbReference>
<dbReference type="NCBIfam" id="NF001750">
    <property type="entry name" value="PRK00476.1"/>
    <property type="match status" value="1"/>
</dbReference>
<dbReference type="PANTHER" id="PTHR22594:SF5">
    <property type="entry name" value="ASPARTATE--TRNA LIGASE, MITOCHONDRIAL"/>
    <property type="match status" value="1"/>
</dbReference>
<dbReference type="PANTHER" id="PTHR22594">
    <property type="entry name" value="ASPARTYL/LYSYL-TRNA SYNTHETASE"/>
    <property type="match status" value="1"/>
</dbReference>
<dbReference type="Pfam" id="PF02938">
    <property type="entry name" value="GAD"/>
    <property type="match status" value="1"/>
</dbReference>
<dbReference type="Pfam" id="PF00152">
    <property type="entry name" value="tRNA-synt_2"/>
    <property type="match status" value="1"/>
</dbReference>
<dbReference type="Pfam" id="PF01336">
    <property type="entry name" value="tRNA_anti-codon"/>
    <property type="match status" value="1"/>
</dbReference>
<dbReference type="PRINTS" id="PR01042">
    <property type="entry name" value="TRNASYNTHASP"/>
</dbReference>
<dbReference type="SUPFAM" id="SSF55681">
    <property type="entry name" value="Class II aaRS and biotin synthetases"/>
    <property type="match status" value="1"/>
</dbReference>
<dbReference type="SUPFAM" id="SSF55261">
    <property type="entry name" value="GAD domain-like"/>
    <property type="match status" value="1"/>
</dbReference>
<dbReference type="SUPFAM" id="SSF50249">
    <property type="entry name" value="Nucleic acid-binding proteins"/>
    <property type="match status" value="1"/>
</dbReference>
<dbReference type="PROSITE" id="PS50862">
    <property type="entry name" value="AA_TRNA_LIGASE_II"/>
    <property type="match status" value="1"/>
</dbReference>
<proteinExistence type="inferred from homology"/>
<evidence type="ECO:0000255" key="1">
    <source>
        <dbReference type="HAMAP-Rule" id="MF_00044"/>
    </source>
</evidence>
<reference key="1">
    <citation type="submission" date="2007-11" db="EMBL/GenBank/DDBJ databases">
        <authorList>
            <consortium name="The Salmonella enterica serovar Paratyphi B Genome Sequencing Project"/>
            <person name="McClelland M."/>
            <person name="Sanderson E.K."/>
            <person name="Porwollik S."/>
            <person name="Spieth J."/>
            <person name="Clifton W.S."/>
            <person name="Fulton R."/>
            <person name="Cordes M."/>
            <person name="Wollam A."/>
            <person name="Shah N."/>
            <person name="Pepin K."/>
            <person name="Bhonagiri V."/>
            <person name="Nash W."/>
            <person name="Johnson M."/>
            <person name="Thiruvilangam P."/>
            <person name="Wilson R."/>
        </authorList>
    </citation>
    <scope>NUCLEOTIDE SEQUENCE [LARGE SCALE GENOMIC DNA]</scope>
    <source>
        <strain>ATCC BAA-1250 / SPB7</strain>
    </source>
</reference>
<protein>
    <recommendedName>
        <fullName evidence="1">Aspartate--tRNA ligase</fullName>
        <ecNumber evidence="1">6.1.1.12</ecNumber>
    </recommendedName>
    <alternativeName>
        <fullName evidence="1">Aspartyl-tRNA synthetase</fullName>
        <shortName evidence="1">AspRS</shortName>
    </alternativeName>
</protein>
<sequence length="590" mass="65767">MRTEYCGQLRLSHVGQQVTLCGWVNRRRDLGSLIFIDMRDREGIVQVFFDPDRADALKLASELRNEFCIQVTGTVRARDAKNVNADMATGEIEVLASSLTIINRADSLPLDANHVNTEEARLKYRYLDLRRPEMAQRLKTRAKITSLVRRFMDDHGFLDIETPMLTKATPEGARDYLVPSRVHKGKFYALPQSPQLFKQLLMMSGFDRYYQIVKCFRDEDLRADRQPEFTQIDVETSFMTAPQVREVMEALVRHLWLEVKGVDLGDFPVMTFAEAERRYGSDKPDLRNPMELVDVADLLKSVEFAVFAGPANDPKGRVAALRVPGGAQLSRKQIDDYGNFVKIYGAKGLAYIKVNERAKGLDGINSPVAKFLTADIVEAILERTGAQDGDMIFFGADNKKVVADALGALRLKLGKDLSLTDEDKWAPLWVIDFPMFEDDGEGGLTAMHHPFTAPRDMTASELKTAPEEAVANAYDMVINGYEVGGGSVRIHNGEMQQTVFGILGINEQEQREKFGFLLDALKYGTPPHAGLAFGLDRLTMLLTGTDNIRDVIAFPKTTAAACLMTEAPSFANQAALTELGIQVVKKAENN</sequence>
<gene>
    <name evidence="1" type="primary">aspS</name>
    <name type="ordered locus">SPAB_01263</name>
</gene>
<organism>
    <name type="scientific">Salmonella paratyphi B (strain ATCC BAA-1250 / SPB7)</name>
    <dbReference type="NCBI Taxonomy" id="1016998"/>
    <lineage>
        <taxon>Bacteria</taxon>
        <taxon>Pseudomonadati</taxon>
        <taxon>Pseudomonadota</taxon>
        <taxon>Gammaproteobacteria</taxon>
        <taxon>Enterobacterales</taxon>
        <taxon>Enterobacteriaceae</taxon>
        <taxon>Salmonella</taxon>
    </lineage>
</organism>
<feature type="chain" id="PRO_1000074718" description="Aspartate--tRNA ligase">
    <location>
        <begin position="1"/>
        <end position="590"/>
    </location>
</feature>
<feature type="region of interest" description="Aspartate" evidence="1">
    <location>
        <begin position="195"/>
        <end position="198"/>
    </location>
</feature>
<feature type="binding site" evidence="1">
    <location>
        <position position="171"/>
    </location>
    <ligand>
        <name>L-aspartate</name>
        <dbReference type="ChEBI" id="CHEBI:29991"/>
    </ligand>
</feature>
<feature type="binding site" evidence="1">
    <location>
        <begin position="217"/>
        <end position="219"/>
    </location>
    <ligand>
        <name>ATP</name>
        <dbReference type="ChEBI" id="CHEBI:30616"/>
    </ligand>
</feature>
<feature type="binding site" evidence="1">
    <location>
        <position position="217"/>
    </location>
    <ligand>
        <name>L-aspartate</name>
        <dbReference type="ChEBI" id="CHEBI:29991"/>
    </ligand>
</feature>
<feature type="binding site" evidence="1">
    <location>
        <position position="226"/>
    </location>
    <ligand>
        <name>ATP</name>
        <dbReference type="ChEBI" id="CHEBI:30616"/>
    </ligand>
</feature>
<feature type="binding site" evidence="1">
    <location>
        <position position="448"/>
    </location>
    <ligand>
        <name>L-aspartate</name>
        <dbReference type="ChEBI" id="CHEBI:29991"/>
    </ligand>
</feature>
<feature type="binding site" evidence="1">
    <location>
        <position position="482"/>
    </location>
    <ligand>
        <name>ATP</name>
        <dbReference type="ChEBI" id="CHEBI:30616"/>
    </ligand>
</feature>
<feature type="binding site" evidence="1">
    <location>
        <position position="489"/>
    </location>
    <ligand>
        <name>L-aspartate</name>
        <dbReference type="ChEBI" id="CHEBI:29991"/>
    </ligand>
</feature>
<feature type="binding site" evidence="1">
    <location>
        <begin position="534"/>
        <end position="537"/>
    </location>
    <ligand>
        <name>ATP</name>
        <dbReference type="ChEBI" id="CHEBI:30616"/>
    </ligand>
</feature>
<comment type="function">
    <text evidence="1">Catalyzes the attachment of L-aspartate to tRNA(Asp) in a two-step reaction: L-aspartate is first activated by ATP to form Asp-AMP and then transferred to the acceptor end of tRNA(Asp).</text>
</comment>
<comment type="catalytic activity">
    <reaction evidence="1">
        <text>tRNA(Asp) + L-aspartate + ATP = L-aspartyl-tRNA(Asp) + AMP + diphosphate</text>
        <dbReference type="Rhea" id="RHEA:19649"/>
        <dbReference type="Rhea" id="RHEA-COMP:9660"/>
        <dbReference type="Rhea" id="RHEA-COMP:9678"/>
        <dbReference type="ChEBI" id="CHEBI:29991"/>
        <dbReference type="ChEBI" id="CHEBI:30616"/>
        <dbReference type="ChEBI" id="CHEBI:33019"/>
        <dbReference type="ChEBI" id="CHEBI:78442"/>
        <dbReference type="ChEBI" id="CHEBI:78516"/>
        <dbReference type="ChEBI" id="CHEBI:456215"/>
        <dbReference type="EC" id="6.1.1.12"/>
    </reaction>
</comment>
<comment type="subunit">
    <text evidence="1">Homodimer.</text>
</comment>
<comment type="subcellular location">
    <subcellularLocation>
        <location evidence="1">Cytoplasm</location>
    </subcellularLocation>
</comment>
<comment type="similarity">
    <text evidence="1">Belongs to the class-II aminoacyl-tRNA synthetase family. Type 1 subfamily.</text>
</comment>